<proteinExistence type="evidence at transcript level"/>
<organism>
    <name type="scientific">Mus musculus</name>
    <name type="common">Mouse</name>
    <dbReference type="NCBI Taxonomy" id="10090"/>
    <lineage>
        <taxon>Eukaryota</taxon>
        <taxon>Metazoa</taxon>
        <taxon>Chordata</taxon>
        <taxon>Craniata</taxon>
        <taxon>Vertebrata</taxon>
        <taxon>Euteleostomi</taxon>
        <taxon>Mammalia</taxon>
        <taxon>Eutheria</taxon>
        <taxon>Euarchontoglires</taxon>
        <taxon>Glires</taxon>
        <taxon>Rodentia</taxon>
        <taxon>Myomorpha</taxon>
        <taxon>Muroidea</taxon>
        <taxon>Muridae</taxon>
        <taxon>Murinae</taxon>
        <taxon>Mus</taxon>
        <taxon>Mus</taxon>
    </lineage>
</organism>
<accession>Q99MP3</accession>
<feature type="signal peptide" evidence="3">
    <location>
        <begin position="1"/>
        <end position="26"/>
    </location>
</feature>
<feature type="propeptide" id="PRO_0000004089" evidence="1">
    <location>
        <begin position="27"/>
        <end position="82"/>
    </location>
</feature>
<feature type="peptide" id="PRO_0000004090" description="Calcitonin gene-related peptide 2">
    <location>
        <begin position="84"/>
        <end position="120"/>
    </location>
</feature>
<feature type="propeptide" id="PRO_0000004091" evidence="1">
    <location>
        <begin position="127"/>
        <end position="130"/>
    </location>
</feature>
<feature type="modified residue" description="Phenylalanine amide" evidence="1">
    <location>
        <position position="120"/>
    </location>
</feature>
<feature type="disulfide bond" evidence="2">
    <location>
        <begin position="85"/>
        <end position="90"/>
    </location>
</feature>
<keyword id="KW-0027">Amidation</keyword>
<keyword id="KW-0165">Cleavage on pair of basic residues</keyword>
<keyword id="KW-1015">Disulfide bond</keyword>
<keyword id="KW-0372">Hormone</keyword>
<keyword id="KW-1185">Reference proteome</keyword>
<keyword id="KW-0964">Secreted</keyword>
<keyword id="KW-0732">Signal</keyword>
<protein>
    <recommendedName>
        <fullName>Calcitonin gene-related peptide 2</fullName>
        <shortName evidence="2">CGRP2</shortName>
    </recommendedName>
    <alternativeName>
        <fullName>Beta-type CGRP</fullName>
    </alternativeName>
    <alternativeName>
        <fullName>Calcitonin gene-related peptide II</fullName>
        <shortName>CGRP-II</shortName>
    </alternativeName>
</protein>
<comment type="function">
    <text evidence="2">CALCB/CGRP2 is a peptide hormone that induces vasodilation mediated by the CALCRL-RAMP1 receptor complex. Dilates a variety of vessels including the coronary, cerebral and systemic vasculature. Its abundance in the CNS also points toward a neurotransmitter or neuromodulator role.</text>
</comment>
<comment type="subcellular location">
    <subcellularLocation>
        <location evidence="2">Secreted</location>
    </subcellularLocation>
</comment>
<comment type="tissue specificity">
    <text evidence="4">Detected in nerve cells of cerebrum, hippocampus and pons/midbrain in newborns, and only in nerve cells of pons/midbrain in adult.</text>
</comment>
<comment type="similarity">
    <text evidence="5">Belongs to the calcitonin family.</text>
</comment>
<evidence type="ECO:0000250" key="1"/>
<evidence type="ECO:0000250" key="2">
    <source>
        <dbReference type="UniProtKB" id="P10092"/>
    </source>
</evidence>
<evidence type="ECO:0000255" key="3"/>
<evidence type="ECO:0000269" key="4">
    <source>
    </source>
</evidence>
<evidence type="ECO:0000305" key="5"/>
<evidence type="ECO:0000312" key="6">
    <source>
        <dbReference type="MGI" id="MGI:2151254"/>
    </source>
</evidence>
<sequence length="130" mass="14623">MDFWKFFPFLALSTIWVLCLASSLQAAPFRSALESSLDLGTLGDQEKHLLLAALMQDYEQMKARKLEQEEQETKGSRVTAQKRSCNTATCVTHRLADLLSRSGGVLKDNFVPTDVGSEAFGRRRRRDLQA</sequence>
<reference key="1">
    <citation type="journal article" date="2001" name="DNA Seq.">
        <title>Structure of the mouse calcitonin/calcitonin gene-related peptide alpha and beta genes.</title>
        <authorList>
            <person name="Thomas P.M."/>
            <person name="Nasonkin I."/>
            <person name="Zhang H."/>
            <person name="Gagel R.F."/>
            <person name="Cote G.J."/>
        </authorList>
    </citation>
    <scope>NUCLEOTIDE SEQUENCE [GENOMIC DNA]</scope>
    <source>
        <strain>129/Sv</strain>
    </source>
</reference>
<reference key="2">
    <citation type="journal article" date="2008" name="Cytogenet. Genome Res.">
        <title>Genomic organization, expression and evolution of porcine CRSP1, 2, and 3.</title>
        <authorList>
            <person name="Rezaeian A.H."/>
            <person name="Katafuchi T."/>
            <person name="Yoshizawa M."/>
            <person name="Hiraiwa N."/>
            <person name="Saito T."/>
            <person name="Nishibori M."/>
            <person name="Hamano K."/>
            <person name="Minamino N."/>
            <person name="Yasue H."/>
        </authorList>
    </citation>
    <scope>TISSUE SPECIFICITY</scope>
</reference>
<name>CALCB_MOUSE</name>
<dbReference type="EMBL" id="AF325526">
    <property type="protein sequence ID" value="AAK16431.1"/>
    <property type="molecule type" value="Genomic_DNA"/>
</dbReference>
<dbReference type="EMBL" id="AF325524">
    <property type="protein sequence ID" value="AAK16431.1"/>
    <property type="status" value="JOINED"/>
    <property type="molecule type" value="Genomic_DNA"/>
</dbReference>
<dbReference type="CCDS" id="CCDS21764.1"/>
<dbReference type="FunCoup" id="Q99MP3">
    <property type="interactions" value="57"/>
</dbReference>
<dbReference type="STRING" id="10090.ENSMUSP00000032902"/>
<dbReference type="PhosphoSitePlus" id="Q99MP3"/>
<dbReference type="PaxDb" id="10090-ENSMUSP00000032902"/>
<dbReference type="ProteomicsDB" id="273904"/>
<dbReference type="AGR" id="MGI:2151254"/>
<dbReference type="MGI" id="MGI:2151254">
    <property type="gene designation" value="Calcb"/>
</dbReference>
<dbReference type="eggNOG" id="ENOG502SQMP">
    <property type="taxonomic scope" value="Eukaryota"/>
</dbReference>
<dbReference type="InParanoid" id="Q99MP3"/>
<dbReference type="PhylomeDB" id="Q99MP3"/>
<dbReference type="Reactome" id="R-MMU-418555">
    <property type="pathway name" value="G alpha (s) signalling events"/>
</dbReference>
<dbReference type="Reactome" id="R-MMU-419812">
    <property type="pathway name" value="Calcitonin-like ligand receptors"/>
</dbReference>
<dbReference type="PRO" id="PR:Q99MP3"/>
<dbReference type="Proteomes" id="UP000000589">
    <property type="component" value="Unplaced"/>
</dbReference>
<dbReference type="RNAct" id="Q99MP3">
    <property type="molecule type" value="protein"/>
</dbReference>
<dbReference type="GO" id="GO:0005576">
    <property type="term" value="C:extracellular region"/>
    <property type="evidence" value="ECO:0007669"/>
    <property type="project" value="UniProtKB-SubCell"/>
</dbReference>
<dbReference type="GO" id="GO:0005179">
    <property type="term" value="F:hormone activity"/>
    <property type="evidence" value="ECO:0007669"/>
    <property type="project" value="UniProtKB-KW"/>
</dbReference>
<dbReference type="Gene3D" id="6.10.250.2190">
    <property type="match status" value="1"/>
</dbReference>
<dbReference type="InterPro" id="IPR021117">
    <property type="entry name" value="Calcitonin-like"/>
</dbReference>
<dbReference type="InterPro" id="IPR021116">
    <property type="entry name" value="Calcitonin/adrenomedullin"/>
</dbReference>
<dbReference type="InterPro" id="IPR018360">
    <property type="entry name" value="Calcitonin_CS"/>
</dbReference>
<dbReference type="InterPro" id="IPR015476">
    <property type="entry name" value="Calcitonin_gene-rel_peptide"/>
</dbReference>
<dbReference type="InterPro" id="IPR001693">
    <property type="entry name" value="Calcitonin_peptide-like"/>
</dbReference>
<dbReference type="PANTHER" id="PTHR10505:SF3">
    <property type="entry name" value="CALCITONIN GENE-RELATED PEPTIDE 2"/>
    <property type="match status" value="1"/>
</dbReference>
<dbReference type="PANTHER" id="PTHR10505">
    <property type="entry name" value="CALCITONIN-RELATED"/>
    <property type="match status" value="1"/>
</dbReference>
<dbReference type="Pfam" id="PF00214">
    <property type="entry name" value="Calc_CGRP_IAPP"/>
    <property type="match status" value="1"/>
</dbReference>
<dbReference type="PRINTS" id="PR00817">
    <property type="entry name" value="CALCITONINB"/>
</dbReference>
<dbReference type="SMART" id="SM00113">
    <property type="entry name" value="CALCITONIN"/>
    <property type="match status" value="1"/>
</dbReference>
<dbReference type="PROSITE" id="PS00258">
    <property type="entry name" value="CALCITONIN"/>
    <property type="match status" value="1"/>
</dbReference>
<gene>
    <name evidence="6" type="primary">Calcb</name>
</gene>